<accession>Q62426</accession>
<accession>Q3UAW2</accession>
<protein>
    <recommendedName>
        <fullName>Cystatin-B</fullName>
    </recommendedName>
    <alternativeName>
        <fullName>Stefin-B</fullName>
    </alternativeName>
</protein>
<dbReference type="EMBL" id="U59807">
    <property type="protein sequence ID" value="AAC52851.1"/>
    <property type="molecule type" value="Genomic_DNA"/>
</dbReference>
<dbReference type="EMBL" id="AK002403">
    <property type="protein sequence ID" value="BAB22074.1"/>
    <property type="molecule type" value="mRNA"/>
</dbReference>
<dbReference type="EMBL" id="AK151205">
    <property type="protein sequence ID" value="BAE30202.1"/>
    <property type="molecule type" value="mRNA"/>
</dbReference>
<dbReference type="EMBL" id="BC056170">
    <property type="protein sequence ID" value="AAH56170.1"/>
    <property type="molecule type" value="mRNA"/>
</dbReference>
<dbReference type="CCDS" id="CCDS23964.1"/>
<dbReference type="RefSeq" id="NP_031819.1">
    <property type="nucleotide sequence ID" value="NM_007793.3"/>
</dbReference>
<dbReference type="SMR" id="Q62426"/>
<dbReference type="BioGRID" id="198959">
    <property type="interactions" value="18"/>
</dbReference>
<dbReference type="FunCoup" id="Q62426">
    <property type="interactions" value="1013"/>
</dbReference>
<dbReference type="IntAct" id="Q62426">
    <property type="interactions" value="2"/>
</dbReference>
<dbReference type="MINT" id="Q62426"/>
<dbReference type="STRING" id="10090.ENSMUSP00000005185"/>
<dbReference type="MEROPS" id="I25.003"/>
<dbReference type="GlyGen" id="Q62426">
    <property type="glycosylation" value="1 site, 1 O-linked glycan (1 site)"/>
</dbReference>
<dbReference type="iPTMnet" id="Q62426"/>
<dbReference type="PhosphoSitePlus" id="Q62426"/>
<dbReference type="SwissPalm" id="Q62426"/>
<dbReference type="jPOST" id="Q62426"/>
<dbReference type="PaxDb" id="10090-ENSMUSP00000005185"/>
<dbReference type="PeptideAtlas" id="Q62426"/>
<dbReference type="ProteomicsDB" id="277940"/>
<dbReference type="Antibodypedia" id="4378">
    <property type="antibodies" value="826 antibodies from 37 providers"/>
</dbReference>
<dbReference type="DNASU" id="13014"/>
<dbReference type="Ensembl" id="ENSMUST00000005185.8">
    <property type="protein sequence ID" value="ENSMUSP00000005185.7"/>
    <property type="gene ID" value="ENSMUSG00000005054.8"/>
</dbReference>
<dbReference type="GeneID" id="13014"/>
<dbReference type="KEGG" id="mmu:13014"/>
<dbReference type="UCSC" id="uc007fxt.1">
    <property type="organism name" value="mouse"/>
</dbReference>
<dbReference type="AGR" id="MGI:109514"/>
<dbReference type="CTD" id="1476"/>
<dbReference type="MGI" id="MGI:109514">
    <property type="gene designation" value="Cstb"/>
</dbReference>
<dbReference type="VEuPathDB" id="HostDB:ENSMUSG00000005054"/>
<dbReference type="eggNOG" id="ENOG502SF2X">
    <property type="taxonomic scope" value="Eukaryota"/>
</dbReference>
<dbReference type="GeneTree" id="ENSGT00940000154826"/>
<dbReference type="HOGENOM" id="CLU_150234_2_1_1"/>
<dbReference type="InParanoid" id="Q62426"/>
<dbReference type="OMA" id="LPHENQP"/>
<dbReference type="OrthoDB" id="2429551at2759"/>
<dbReference type="PhylomeDB" id="Q62426"/>
<dbReference type="TreeFam" id="TF333174"/>
<dbReference type="Reactome" id="R-MMU-6798695">
    <property type="pathway name" value="Neutrophil degranulation"/>
</dbReference>
<dbReference type="BioGRID-ORCS" id="13014">
    <property type="hits" value="1 hit in 77 CRISPR screens"/>
</dbReference>
<dbReference type="ChiTaRS" id="Cstb">
    <property type="organism name" value="mouse"/>
</dbReference>
<dbReference type="PRO" id="PR:Q62426"/>
<dbReference type="Proteomes" id="UP000000589">
    <property type="component" value="Chromosome 10"/>
</dbReference>
<dbReference type="RNAct" id="Q62426">
    <property type="molecule type" value="protein"/>
</dbReference>
<dbReference type="Bgee" id="ENSMUSG00000005054">
    <property type="expression patterns" value="Expressed in gastrula and 281 other cell types or tissues"/>
</dbReference>
<dbReference type="GO" id="GO:0062023">
    <property type="term" value="C:collagen-containing extracellular matrix"/>
    <property type="evidence" value="ECO:0007005"/>
    <property type="project" value="BHF-UCL"/>
</dbReference>
<dbReference type="GO" id="GO:0005829">
    <property type="term" value="C:cytosol"/>
    <property type="evidence" value="ECO:0007669"/>
    <property type="project" value="Ensembl"/>
</dbReference>
<dbReference type="GO" id="GO:0005615">
    <property type="term" value="C:extracellular space"/>
    <property type="evidence" value="ECO:0007669"/>
    <property type="project" value="Ensembl"/>
</dbReference>
<dbReference type="GO" id="GO:0005730">
    <property type="term" value="C:nucleolus"/>
    <property type="evidence" value="ECO:0007669"/>
    <property type="project" value="Ensembl"/>
</dbReference>
<dbReference type="GO" id="GO:0005634">
    <property type="term" value="C:nucleus"/>
    <property type="evidence" value="ECO:0000266"/>
    <property type="project" value="MGI"/>
</dbReference>
<dbReference type="GO" id="GO:0004869">
    <property type="term" value="F:cysteine-type endopeptidase inhibitor activity"/>
    <property type="evidence" value="ECO:0007669"/>
    <property type="project" value="UniProtKB-KW"/>
</dbReference>
<dbReference type="GO" id="GO:0004866">
    <property type="term" value="F:endopeptidase inhibitor activity"/>
    <property type="evidence" value="ECO:0000266"/>
    <property type="project" value="MGI"/>
</dbReference>
<dbReference type="GO" id="GO:0002020">
    <property type="term" value="F:protease binding"/>
    <property type="evidence" value="ECO:0000266"/>
    <property type="project" value="MGI"/>
</dbReference>
<dbReference type="GO" id="GO:0008344">
    <property type="term" value="P:adult locomotory behavior"/>
    <property type="evidence" value="ECO:0000315"/>
    <property type="project" value="MGI"/>
</dbReference>
<dbReference type="GO" id="GO:1990000">
    <property type="term" value="P:amyloid fibril formation"/>
    <property type="evidence" value="ECO:0007669"/>
    <property type="project" value="Ensembl"/>
</dbReference>
<dbReference type="GO" id="GO:0045861">
    <property type="term" value="P:negative regulation of proteolysis"/>
    <property type="evidence" value="ECO:0007669"/>
    <property type="project" value="Ensembl"/>
</dbReference>
<dbReference type="CDD" id="cd00042">
    <property type="entry name" value="CY"/>
    <property type="match status" value="1"/>
</dbReference>
<dbReference type="FunFam" id="3.10.450.10:FF:000001">
    <property type="entry name" value="Cystatin-A"/>
    <property type="match status" value="1"/>
</dbReference>
<dbReference type="Gene3D" id="3.10.450.10">
    <property type="match status" value="1"/>
</dbReference>
<dbReference type="InterPro" id="IPR000010">
    <property type="entry name" value="Cystatin_dom"/>
</dbReference>
<dbReference type="InterPro" id="IPR046350">
    <property type="entry name" value="Cystatin_sf"/>
</dbReference>
<dbReference type="InterPro" id="IPR018073">
    <property type="entry name" value="Prot_inh_cystat_CS"/>
</dbReference>
<dbReference type="InterPro" id="IPR001713">
    <property type="entry name" value="Prot_inh_stefin"/>
</dbReference>
<dbReference type="PANTHER" id="PTHR11414">
    <property type="entry name" value="CYSTATIN FAMILY MEMBER"/>
    <property type="match status" value="1"/>
</dbReference>
<dbReference type="PANTHER" id="PTHR11414:SF22">
    <property type="entry name" value="CYSTATIN-B"/>
    <property type="match status" value="1"/>
</dbReference>
<dbReference type="Pfam" id="PF00031">
    <property type="entry name" value="Cystatin"/>
    <property type="match status" value="1"/>
</dbReference>
<dbReference type="PRINTS" id="PR00295">
    <property type="entry name" value="STEFINA"/>
</dbReference>
<dbReference type="SMART" id="SM00043">
    <property type="entry name" value="CY"/>
    <property type="match status" value="1"/>
</dbReference>
<dbReference type="SUPFAM" id="SSF54403">
    <property type="entry name" value="Cystatin/monellin"/>
    <property type="match status" value="1"/>
</dbReference>
<dbReference type="PROSITE" id="PS00287">
    <property type="entry name" value="CYSTATIN"/>
    <property type="match status" value="1"/>
</dbReference>
<proteinExistence type="evidence at protein level"/>
<keyword id="KW-0007">Acetylation</keyword>
<keyword id="KW-0963">Cytoplasm</keyword>
<keyword id="KW-0646">Protease inhibitor</keyword>
<keyword id="KW-1185">Reference proteome</keyword>
<keyword id="KW-0789">Thiol protease inhibitor</keyword>
<gene>
    <name type="primary">Cstb</name>
    <name type="synonym">Cst6</name>
    <name type="synonym">Stfb</name>
</gene>
<sequence length="98" mass="11046">MMCGAPSATMPATAETQEVADQVKSQLESKENQKFDVFKAISFKRQIVAGTNLFIKVDVGGDKCVHLRVFQPLPHENKPLTLSSYQTNKERHDELSYF</sequence>
<evidence type="ECO:0000250" key="1"/>
<evidence type="ECO:0000250" key="2">
    <source>
        <dbReference type="UniProtKB" id="P25417"/>
    </source>
</evidence>
<evidence type="ECO:0000305" key="3"/>
<comment type="function">
    <text>This is an intracellular thiol proteinase inhibitor.</text>
</comment>
<comment type="subcellular location">
    <subcellularLocation>
        <location>Cytoplasm</location>
    </subcellularLocation>
</comment>
<comment type="tissue specificity">
    <text>Widely expressed. Highest expression in heart, liver and kidney. Lower levels in brain, lung and skeletal muscle. Lowest levels in spleen and testis.</text>
</comment>
<comment type="similarity">
    <text evidence="3">Belongs to the cystatin family.</text>
</comment>
<name>CYTB_MOUSE</name>
<organism>
    <name type="scientific">Mus musculus</name>
    <name type="common">Mouse</name>
    <dbReference type="NCBI Taxonomy" id="10090"/>
    <lineage>
        <taxon>Eukaryota</taxon>
        <taxon>Metazoa</taxon>
        <taxon>Chordata</taxon>
        <taxon>Craniata</taxon>
        <taxon>Vertebrata</taxon>
        <taxon>Euteleostomi</taxon>
        <taxon>Mammalia</taxon>
        <taxon>Eutheria</taxon>
        <taxon>Euarchontoglires</taxon>
        <taxon>Glires</taxon>
        <taxon>Rodentia</taxon>
        <taxon>Myomorpha</taxon>
        <taxon>Muroidea</taxon>
        <taxon>Muridae</taxon>
        <taxon>Murinae</taxon>
        <taxon>Mus</taxon>
        <taxon>Mus</taxon>
    </lineage>
</organism>
<feature type="chain" id="PRO_0000207141" description="Cystatin-B">
    <location>
        <begin position="1"/>
        <end position="98"/>
    </location>
</feature>
<feature type="short sequence motif" description="Secondary area of contact" evidence="1">
    <location>
        <begin position="46"/>
        <end position="50"/>
    </location>
</feature>
<feature type="site" description="Reactive site" evidence="1">
    <location>
        <position position="4"/>
    </location>
</feature>
<feature type="modified residue" description="N-acetylmethionine" evidence="2">
    <location>
        <position position="1"/>
    </location>
</feature>
<reference key="1">
    <citation type="journal article" date="1996" name="Genome Res.">
        <title>Isolation and characterization of the mouse cystatin B gene.</title>
        <authorList>
            <person name="Pennacchio L.A."/>
            <person name="Myers R.M."/>
        </authorList>
    </citation>
    <scope>NUCLEOTIDE SEQUENCE [GENOMIC DNA]</scope>
</reference>
<reference key="2">
    <citation type="journal article" date="2005" name="Science">
        <title>The transcriptional landscape of the mammalian genome.</title>
        <authorList>
            <person name="Carninci P."/>
            <person name="Kasukawa T."/>
            <person name="Katayama S."/>
            <person name="Gough J."/>
            <person name="Frith M.C."/>
            <person name="Maeda N."/>
            <person name="Oyama R."/>
            <person name="Ravasi T."/>
            <person name="Lenhard B."/>
            <person name="Wells C."/>
            <person name="Kodzius R."/>
            <person name="Shimokawa K."/>
            <person name="Bajic V.B."/>
            <person name="Brenner S.E."/>
            <person name="Batalov S."/>
            <person name="Forrest A.R."/>
            <person name="Zavolan M."/>
            <person name="Davis M.J."/>
            <person name="Wilming L.G."/>
            <person name="Aidinis V."/>
            <person name="Allen J.E."/>
            <person name="Ambesi-Impiombato A."/>
            <person name="Apweiler R."/>
            <person name="Aturaliya R.N."/>
            <person name="Bailey T.L."/>
            <person name="Bansal M."/>
            <person name="Baxter L."/>
            <person name="Beisel K.W."/>
            <person name="Bersano T."/>
            <person name="Bono H."/>
            <person name="Chalk A.M."/>
            <person name="Chiu K.P."/>
            <person name="Choudhary V."/>
            <person name="Christoffels A."/>
            <person name="Clutterbuck D.R."/>
            <person name="Crowe M.L."/>
            <person name="Dalla E."/>
            <person name="Dalrymple B.P."/>
            <person name="de Bono B."/>
            <person name="Della Gatta G."/>
            <person name="di Bernardo D."/>
            <person name="Down T."/>
            <person name="Engstrom P."/>
            <person name="Fagiolini M."/>
            <person name="Faulkner G."/>
            <person name="Fletcher C.F."/>
            <person name="Fukushima T."/>
            <person name="Furuno M."/>
            <person name="Futaki S."/>
            <person name="Gariboldi M."/>
            <person name="Georgii-Hemming P."/>
            <person name="Gingeras T.R."/>
            <person name="Gojobori T."/>
            <person name="Green R.E."/>
            <person name="Gustincich S."/>
            <person name="Harbers M."/>
            <person name="Hayashi Y."/>
            <person name="Hensch T.K."/>
            <person name="Hirokawa N."/>
            <person name="Hill D."/>
            <person name="Huminiecki L."/>
            <person name="Iacono M."/>
            <person name="Ikeo K."/>
            <person name="Iwama A."/>
            <person name="Ishikawa T."/>
            <person name="Jakt M."/>
            <person name="Kanapin A."/>
            <person name="Katoh M."/>
            <person name="Kawasawa Y."/>
            <person name="Kelso J."/>
            <person name="Kitamura H."/>
            <person name="Kitano H."/>
            <person name="Kollias G."/>
            <person name="Krishnan S.P."/>
            <person name="Kruger A."/>
            <person name="Kummerfeld S.K."/>
            <person name="Kurochkin I.V."/>
            <person name="Lareau L.F."/>
            <person name="Lazarevic D."/>
            <person name="Lipovich L."/>
            <person name="Liu J."/>
            <person name="Liuni S."/>
            <person name="McWilliam S."/>
            <person name="Madan Babu M."/>
            <person name="Madera M."/>
            <person name="Marchionni L."/>
            <person name="Matsuda H."/>
            <person name="Matsuzawa S."/>
            <person name="Miki H."/>
            <person name="Mignone F."/>
            <person name="Miyake S."/>
            <person name="Morris K."/>
            <person name="Mottagui-Tabar S."/>
            <person name="Mulder N."/>
            <person name="Nakano N."/>
            <person name="Nakauchi H."/>
            <person name="Ng P."/>
            <person name="Nilsson R."/>
            <person name="Nishiguchi S."/>
            <person name="Nishikawa S."/>
            <person name="Nori F."/>
            <person name="Ohara O."/>
            <person name="Okazaki Y."/>
            <person name="Orlando V."/>
            <person name="Pang K.C."/>
            <person name="Pavan W.J."/>
            <person name="Pavesi G."/>
            <person name="Pesole G."/>
            <person name="Petrovsky N."/>
            <person name="Piazza S."/>
            <person name="Reed J."/>
            <person name="Reid J.F."/>
            <person name="Ring B.Z."/>
            <person name="Ringwald M."/>
            <person name="Rost B."/>
            <person name="Ruan Y."/>
            <person name="Salzberg S.L."/>
            <person name="Sandelin A."/>
            <person name="Schneider C."/>
            <person name="Schoenbach C."/>
            <person name="Sekiguchi K."/>
            <person name="Semple C.A."/>
            <person name="Seno S."/>
            <person name="Sessa L."/>
            <person name="Sheng Y."/>
            <person name="Shibata Y."/>
            <person name="Shimada H."/>
            <person name="Shimada K."/>
            <person name="Silva D."/>
            <person name="Sinclair B."/>
            <person name="Sperling S."/>
            <person name="Stupka E."/>
            <person name="Sugiura K."/>
            <person name="Sultana R."/>
            <person name="Takenaka Y."/>
            <person name="Taki K."/>
            <person name="Tammoja K."/>
            <person name="Tan S.L."/>
            <person name="Tang S."/>
            <person name="Taylor M.S."/>
            <person name="Tegner J."/>
            <person name="Teichmann S.A."/>
            <person name="Ueda H.R."/>
            <person name="van Nimwegen E."/>
            <person name="Verardo R."/>
            <person name="Wei C.L."/>
            <person name="Yagi K."/>
            <person name="Yamanishi H."/>
            <person name="Zabarovsky E."/>
            <person name="Zhu S."/>
            <person name="Zimmer A."/>
            <person name="Hide W."/>
            <person name="Bult C."/>
            <person name="Grimmond S.M."/>
            <person name="Teasdale R.D."/>
            <person name="Liu E.T."/>
            <person name="Brusic V."/>
            <person name="Quackenbush J."/>
            <person name="Wahlestedt C."/>
            <person name="Mattick J.S."/>
            <person name="Hume D.A."/>
            <person name="Kai C."/>
            <person name="Sasaki D."/>
            <person name="Tomaru Y."/>
            <person name="Fukuda S."/>
            <person name="Kanamori-Katayama M."/>
            <person name="Suzuki M."/>
            <person name="Aoki J."/>
            <person name="Arakawa T."/>
            <person name="Iida J."/>
            <person name="Imamura K."/>
            <person name="Itoh M."/>
            <person name="Kato T."/>
            <person name="Kawaji H."/>
            <person name="Kawagashira N."/>
            <person name="Kawashima T."/>
            <person name="Kojima M."/>
            <person name="Kondo S."/>
            <person name="Konno H."/>
            <person name="Nakano K."/>
            <person name="Ninomiya N."/>
            <person name="Nishio T."/>
            <person name="Okada M."/>
            <person name="Plessy C."/>
            <person name="Shibata K."/>
            <person name="Shiraki T."/>
            <person name="Suzuki S."/>
            <person name="Tagami M."/>
            <person name="Waki K."/>
            <person name="Watahiki A."/>
            <person name="Okamura-Oho Y."/>
            <person name="Suzuki H."/>
            <person name="Kawai J."/>
            <person name="Hayashizaki Y."/>
        </authorList>
    </citation>
    <scope>NUCLEOTIDE SEQUENCE [LARGE SCALE MRNA]</scope>
    <source>
        <strain>C57BL/6J</strain>
        <tissue>Bone marrow</tissue>
        <tissue>Kidney</tissue>
    </source>
</reference>
<reference key="3">
    <citation type="journal article" date="2004" name="Genome Res.">
        <title>The status, quality, and expansion of the NIH full-length cDNA project: the Mammalian Gene Collection (MGC).</title>
        <authorList>
            <consortium name="The MGC Project Team"/>
        </authorList>
    </citation>
    <scope>NUCLEOTIDE SEQUENCE [LARGE SCALE MRNA]</scope>
    <source>
        <strain>C57BL/6J</strain>
        <tissue>Brain</tissue>
    </source>
</reference>
<reference key="4">
    <citation type="journal article" date="2010" name="Cell">
        <title>A tissue-specific atlas of mouse protein phosphorylation and expression.</title>
        <authorList>
            <person name="Huttlin E.L."/>
            <person name="Jedrychowski M.P."/>
            <person name="Elias J.E."/>
            <person name="Goswami T."/>
            <person name="Rad R."/>
            <person name="Beausoleil S.A."/>
            <person name="Villen J."/>
            <person name="Haas W."/>
            <person name="Sowa M.E."/>
            <person name="Gygi S.P."/>
        </authorList>
    </citation>
    <scope>IDENTIFICATION BY MASS SPECTROMETRY [LARGE SCALE ANALYSIS]</scope>
    <source>
        <tissue>Brain</tissue>
        <tissue>Brown adipose tissue</tissue>
        <tissue>Heart</tissue>
        <tissue>Kidney</tissue>
        <tissue>Liver</tissue>
        <tissue>Lung</tissue>
        <tissue>Pancreas</tissue>
        <tissue>Spleen</tissue>
        <tissue>Testis</tissue>
    </source>
</reference>